<dbReference type="EC" id="2.4.2.10" evidence="1"/>
<dbReference type="EMBL" id="CP000103">
    <property type="protein sequence ID" value="ABB73533.1"/>
    <property type="molecule type" value="Genomic_DNA"/>
</dbReference>
<dbReference type="RefSeq" id="WP_011379587.1">
    <property type="nucleotide sequence ID" value="NC_007614.1"/>
</dbReference>
<dbReference type="SMR" id="Q2YCI8"/>
<dbReference type="STRING" id="323848.Nmul_A0225"/>
<dbReference type="KEGG" id="nmu:Nmul_A0225"/>
<dbReference type="eggNOG" id="COG0461">
    <property type="taxonomic scope" value="Bacteria"/>
</dbReference>
<dbReference type="HOGENOM" id="CLU_074878_0_1_4"/>
<dbReference type="OrthoDB" id="9779060at2"/>
<dbReference type="UniPathway" id="UPA00070">
    <property type="reaction ID" value="UER00119"/>
</dbReference>
<dbReference type="Proteomes" id="UP000002718">
    <property type="component" value="Chromosome"/>
</dbReference>
<dbReference type="GO" id="GO:0005737">
    <property type="term" value="C:cytoplasm"/>
    <property type="evidence" value="ECO:0007669"/>
    <property type="project" value="TreeGrafter"/>
</dbReference>
<dbReference type="GO" id="GO:0000287">
    <property type="term" value="F:magnesium ion binding"/>
    <property type="evidence" value="ECO:0007669"/>
    <property type="project" value="UniProtKB-UniRule"/>
</dbReference>
<dbReference type="GO" id="GO:0004588">
    <property type="term" value="F:orotate phosphoribosyltransferase activity"/>
    <property type="evidence" value="ECO:0007669"/>
    <property type="project" value="UniProtKB-UniRule"/>
</dbReference>
<dbReference type="GO" id="GO:0006207">
    <property type="term" value="P:'de novo' pyrimidine nucleobase biosynthetic process"/>
    <property type="evidence" value="ECO:0007669"/>
    <property type="project" value="TreeGrafter"/>
</dbReference>
<dbReference type="GO" id="GO:0044205">
    <property type="term" value="P:'de novo' UMP biosynthetic process"/>
    <property type="evidence" value="ECO:0007669"/>
    <property type="project" value="UniProtKB-UniRule"/>
</dbReference>
<dbReference type="GO" id="GO:0046132">
    <property type="term" value="P:pyrimidine ribonucleoside biosynthetic process"/>
    <property type="evidence" value="ECO:0007669"/>
    <property type="project" value="TreeGrafter"/>
</dbReference>
<dbReference type="CDD" id="cd06223">
    <property type="entry name" value="PRTases_typeI"/>
    <property type="match status" value="1"/>
</dbReference>
<dbReference type="FunFam" id="3.40.50.2020:FF:000008">
    <property type="entry name" value="Orotate phosphoribosyltransferase"/>
    <property type="match status" value="1"/>
</dbReference>
<dbReference type="Gene3D" id="3.40.50.2020">
    <property type="match status" value="1"/>
</dbReference>
<dbReference type="HAMAP" id="MF_01208">
    <property type="entry name" value="PyrE"/>
    <property type="match status" value="1"/>
</dbReference>
<dbReference type="InterPro" id="IPR023031">
    <property type="entry name" value="OPRT"/>
</dbReference>
<dbReference type="InterPro" id="IPR004467">
    <property type="entry name" value="Or_phspho_trans_dom"/>
</dbReference>
<dbReference type="InterPro" id="IPR000836">
    <property type="entry name" value="PRibTrfase_dom"/>
</dbReference>
<dbReference type="InterPro" id="IPR029057">
    <property type="entry name" value="PRTase-like"/>
</dbReference>
<dbReference type="NCBIfam" id="TIGR00336">
    <property type="entry name" value="pyrE"/>
    <property type="match status" value="1"/>
</dbReference>
<dbReference type="PANTHER" id="PTHR46683">
    <property type="entry name" value="OROTATE PHOSPHORIBOSYLTRANSFERASE 1-RELATED"/>
    <property type="match status" value="1"/>
</dbReference>
<dbReference type="PANTHER" id="PTHR46683:SF1">
    <property type="entry name" value="OROTATE PHOSPHORIBOSYLTRANSFERASE 1-RELATED"/>
    <property type="match status" value="1"/>
</dbReference>
<dbReference type="Pfam" id="PF00156">
    <property type="entry name" value="Pribosyltran"/>
    <property type="match status" value="1"/>
</dbReference>
<dbReference type="SUPFAM" id="SSF53271">
    <property type="entry name" value="PRTase-like"/>
    <property type="match status" value="1"/>
</dbReference>
<dbReference type="PROSITE" id="PS00103">
    <property type="entry name" value="PUR_PYR_PR_TRANSFER"/>
    <property type="match status" value="1"/>
</dbReference>
<gene>
    <name evidence="1" type="primary">pyrE</name>
    <name type="ordered locus">Nmul_A0225</name>
</gene>
<comment type="function">
    <text evidence="1">Catalyzes the transfer of a ribosyl phosphate group from 5-phosphoribose 1-diphosphate to orotate, leading to the formation of orotidine monophosphate (OMP).</text>
</comment>
<comment type="catalytic activity">
    <reaction evidence="1">
        <text>orotidine 5'-phosphate + diphosphate = orotate + 5-phospho-alpha-D-ribose 1-diphosphate</text>
        <dbReference type="Rhea" id="RHEA:10380"/>
        <dbReference type="ChEBI" id="CHEBI:30839"/>
        <dbReference type="ChEBI" id="CHEBI:33019"/>
        <dbReference type="ChEBI" id="CHEBI:57538"/>
        <dbReference type="ChEBI" id="CHEBI:58017"/>
        <dbReference type="EC" id="2.4.2.10"/>
    </reaction>
</comment>
<comment type="cofactor">
    <cofactor evidence="1">
        <name>Mg(2+)</name>
        <dbReference type="ChEBI" id="CHEBI:18420"/>
    </cofactor>
</comment>
<comment type="pathway">
    <text evidence="1">Pyrimidine metabolism; UMP biosynthesis via de novo pathway; UMP from orotate: step 1/2.</text>
</comment>
<comment type="subunit">
    <text evidence="1">Homodimer.</text>
</comment>
<comment type="similarity">
    <text evidence="1">Belongs to the purine/pyrimidine phosphoribosyltransferase family. PyrE subfamily.</text>
</comment>
<feature type="chain" id="PRO_1000066261" description="Orotate phosphoribosyltransferase">
    <location>
        <begin position="1"/>
        <end position="228"/>
    </location>
</feature>
<feature type="binding site" description="in other chain" evidence="1">
    <location>
        <position position="26"/>
    </location>
    <ligand>
        <name>5-phospho-alpha-D-ribose 1-diphosphate</name>
        <dbReference type="ChEBI" id="CHEBI:58017"/>
        <note>ligand shared between dimeric partners</note>
    </ligand>
</feature>
<feature type="binding site" evidence="1">
    <location>
        <begin position="34"/>
        <end position="35"/>
    </location>
    <ligand>
        <name>orotate</name>
        <dbReference type="ChEBI" id="CHEBI:30839"/>
    </ligand>
</feature>
<feature type="binding site" description="in other chain" evidence="1">
    <location>
        <begin position="72"/>
        <end position="73"/>
    </location>
    <ligand>
        <name>5-phospho-alpha-D-ribose 1-diphosphate</name>
        <dbReference type="ChEBI" id="CHEBI:58017"/>
        <note>ligand shared between dimeric partners</note>
    </ligand>
</feature>
<feature type="binding site" evidence="1">
    <location>
        <position position="98"/>
    </location>
    <ligand>
        <name>5-phospho-alpha-D-ribose 1-diphosphate</name>
        <dbReference type="ChEBI" id="CHEBI:58017"/>
        <note>ligand shared between dimeric partners</note>
    </ligand>
</feature>
<feature type="binding site" description="in other chain" evidence="1">
    <location>
        <position position="99"/>
    </location>
    <ligand>
        <name>5-phospho-alpha-D-ribose 1-diphosphate</name>
        <dbReference type="ChEBI" id="CHEBI:58017"/>
        <note>ligand shared between dimeric partners</note>
    </ligand>
</feature>
<feature type="binding site" evidence="1">
    <location>
        <position position="102"/>
    </location>
    <ligand>
        <name>5-phospho-alpha-D-ribose 1-diphosphate</name>
        <dbReference type="ChEBI" id="CHEBI:58017"/>
        <note>ligand shared between dimeric partners</note>
    </ligand>
</feature>
<feature type="binding site" evidence="1">
    <location>
        <position position="104"/>
    </location>
    <ligand>
        <name>5-phospho-alpha-D-ribose 1-diphosphate</name>
        <dbReference type="ChEBI" id="CHEBI:58017"/>
        <note>ligand shared between dimeric partners</note>
    </ligand>
</feature>
<feature type="binding site" description="in other chain" evidence="1">
    <location>
        <begin position="123"/>
        <end position="131"/>
    </location>
    <ligand>
        <name>5-phospho-alpha-D-ribose 1-diphosphate</name>
        <dbReference type="ChEBI" id="CHEBI:58017"/>
        <note>ligand shared between dimeric partners</note>
    </ligand>
</feature>
<feature type="binding site" evidence="1">
    <location>
        <position position="127"/>
    </location>
    <ligand>
        <name>orotate</name>
        <dbReference type="ChEBI" id="CHEBI:30839"/>
    </ligand>
</feature>
<feature type="binding site" evidence="1">
    <location>
        <position position="155"/>
    </location>
    <ligand>
        <name>orotate</name>
        <dbReference type="ChEBI" id="CHEBI:30839"/>
    </ligand>
</feature>
<name>PYRE_NITMU</name>
<reference key="1">
    <citation type="submission" date="2005-08" db="EMBL/GenBank/DDBJ databases">
        <title>Complete sequence of chromosome 1 of Nitrosospira multiformis ATCC 25196.</title>
        <authorList>
            <person name="Copeland A."/>
            <person name="Lucas S."/>
            <person name="Lapidus A."/>
            <person name="Barry K."/>
            <person name="Detter J.C."/>
            <person name="Glavina T."/>
            <person name="Hammon N."/>
            <person name="Israni S."/>
            <person name="Pitluck S."/>
            <person name="Chain P."/>
            <person name="Malfatti S."/>
            <person name="Shin M."/>
            <person name="Vergez L."/>
            <person name="Schmutz J."/>
            <person name="Larimer F."/>
            <person name="Land M."/>
            <person name="Hauser L."/>
            <person name="Kyrpides N."/>
            <person name="Lykidis A."/>
            <person name="Richardson P."/>
        </authorList>
    </citation>
    <scope>NUCLEOTIDE SEQUENCE [LARGE SCALE GENOMIC DNA]</scope>
    <source>
        <strain>ATCC 25196 / NCIMB 11849 / C 71</strain>
    </source>
</reference>
<sequence>MSDFRKEFIEFAIGRNVLCFGEFQTKAGRISPYFFNAGLFNDGESLGKLGQFYAKAILAAQLPFDMLFGPAYKGIPLVSSIAIALADGGNNYPFCFNRKEAKDHGEGGNLVGAPLAGRVLIVDDVISAGTSVRESVEYIHAAGATPAGVAIALDRMERGKGELSAVQEVRCMYGIPVTSIVNLENIVDYLREQGNLAHHLPAVEEYRARYSSRMVEPIECGGGTPRAG</sequence>
<proteinExistence type="inferred from homology"/>
<organism>
    <name type="scientific">Nitrosospira multiformis (strain ATCC 25196 / NCIMB 11849 / C 71)</name>
    <dbReference type="NCBI Taxonomy" id="323848"/>
    <lineage>
        <taxon>Bacteria</taxon>
        <taxon>Pseudomonadati</taxon>
        <taxon>Pseudomonadota</taxon>
        <taxon>Betaproteobacteria</taxon>
        <taxon>Nitrosomonadales</taxon>
        <taxon>Nitrosomonadaceae</taxon>
        <taxon>Nitrosospira</taxon>
    </lineage>
</organism>
<accession>Q2YCI8</accession>
<protein>
    <recommendedName>
        <fullName evidence="1">Orotate phosphoribosyltransferase</fullName>
        <shortName evidence="1">OPRT</shortName>
        <shortName evidence="1">OPRTase</shortName>
        <ecNumber evidence="1">2.4.2.10</ecNumber>
    </recommendedName>
</protein>
<keyword id="KW-0328">Glycosyltransferase</keyword>
<keyword id="KW-0460">Magnesium</keyword>
<keyword id="KW-0665">Pyrimidine biosynthesis</keyword>
<keyword id="KW-1185">Reference proteome</keyword>
<keyword id="KW-0808">Transferase</keyword>
<evidence type="ECO:0000255" key="1">
    <source>
        <dbReference type="HAMAP-Rule" id="MF_01208"/>
    </source>
</evidence>